<sequence>MTSLSSSAAAARATFVMPSSVRGGMSRGRRMARLVTRAAASSPKLPSGRRLRVAVVGGGPAGGAAAEALAKGGVETVLIERKLDNCKPCGGAIPLCMVSEFDLPLDLVDRKVRKMKMISPSNVAVDIGGTLAPHEYIGMVRREVLDAYLRSRAEGAGAEVVNGLFLRYEAPKEPNGSYVVHYNHYDSSNGKAGGEKRTFEVDAIVGADGANSRVAKDMGAGDYEYAIAFQERVKIPDDKMKYYEERAEMYVGDDVSPDFYGWVFPKCDHVAVGTGTVTHKPDIKKFQAATRLRAKDRIEGGKIIRVEAHPIPEHPRPKRVAGRVTLVGDAAGYVTKCSGEGIYFAAKSGRMCAEAIVAGSANGTRMVEESDLRRYLAEFDRLYWPTYKVLDVLQKVFYRSNAAREAFVEMCADDYVQRMTFDSYLYKRVVPGNPLDDIKLAVNTIGSLVRATALRREMEKVTL</sequence>
<comment type="function">
    <text evidence="1">Catalyzes the reduction of geranylgeranyl diphosphate to phytyl diphosphate, providing phytol for both tocopherol and chlorophyll synthesis.</text>
</comment>
<comment type="catalytic activity">
    <reaction>
        <text>phytyl diphosphate + 3 NADP(+) = geranylgeranyl diphosphate + 3 NADPH + 3 H(+)</text>
        <dbReference type="Rhea" id="RHEA:26229"/>
        <dbReference type="ChEBI" id="CHEBI:15378"/>
        <dbReference type="ChEBI" id="CHEBI:57533"/>
        <dbReference type="ChEBI" id="CHEBI:57783"/>
        <dbReference type="ChEBI" id="CHEBI:58349"/>
        <dbReference type="ChEBI" id="CHEBI:75434"/>
        <dbReference type="EC" id="1.3.1.83"/>
    </reaction>
</comment>
<comment type="pathway">
    <text>Porphyrin-containing compound metabolism; chlorophyll biosynthesis.</text>
</comment>
<comment type="pathway">
    <text>Cofactor biosynthesis; tocopherol biosynthesis.</text>
</comment>
<comment type="subcellular location">
    <subcellularLocation>
        <location evidence="3">Plastid</location>
        <location evidence="3">Chloroplast</location>
    </subcellularLocation>
</comment>
<comment type="similarity">
    <text evidence="3">Belongs to the geranylgeranyl reductase family. ChlP subfamily.</text>
</comment>
<comment type="sequence caution" evidence="3">
    <conflict type="erroneous initiation">
        <sequence resource="EMBL-CDS" id="BAF10020"/>
    </conflict>
</comment>
<dbReference type="EC" id="1.3.1.83"/>
<dbReference type="EMBL" id="AP004114">
    <property type="protein sequence ID" value="BAD15541.1"/>
    <property type="molecule type" value="Genomic_DNA"/>
</dbReference>
<dbReference type="EMBL" id="AP005297">
    <property type="protein sequence ID" value="BAD16125.1"/>
    <property type="molecule type" value="Genomic_DNA"/>
</dbReference>
<dbReference type="EMBL" id="AP008208">
    <property type="protein sequence ID" value="BAF10020.2"/>
    <property type="status" value="ALT_INIT"/>
    <property type="molecule type" value="Genomic_DNA"/>
</dbReference>
<dbReference type="EMBL" id="AP014958">
    <property type="protein sequence ID" value="BAS80895.1"/>
    <property type="molecule type" value="Genomic_DNA"/>
</dbReference>
<dbReference type="EMBL" id="CM000139">
    <property type="protein sequence ID" value="EAZ24599.1"/>
    <property type="molecule type" value="Genomic_DNA"/>
</dbReference>
<dbReference type="EMBL" id="AK061968">
    <property type="protein sequence ID" value="BAG88184.1"/>
    <property type="molecule type" value="mRNA"/>
</dbReference>
<dbReference type="RefSeq" id="XP_015627112.1">
    <property type="nucleotide sequence ID" value="XM_015771626.1"/>
</dbReference>
<dbReference type="SMR" id="Q6Z2T6"/>
<dbReference type="BioGRID" id="799748">
    <property type="interactions" value="1"/>
</dbReference>
<dbReference type="FunCoup" id="Q6Z2T6">
    <property type="interactions" value="584"/>
</dbReference>
<dbReference type="STRING" id="39947.Q6Z2T6"/>
<dbReference type="PaxDb" id="39947-Q6Z2T6"/>
<dbReference type="EnsemblPlants" id="Os02t0744900-01">
    <property type="protein sequence ID" value="Os02t0744900-01"/>
    <property type="gene ID" value="Os02g0744900"/>
</dbReference>
<dbReference type="Gramene" id="Os02t0744900-01">
    <property type="protein sequence ID" value="Os02t0744900-01"/>
    <property type="gene ID" value="Os02g0744900"/>
</dbReference>
<dbReference type="KEGG" id="dosa:Os02g0744900"/>
<dbReference type="eggNOG" id="ENOG502QQWY">
    <property type="taxonomic scope" value="Eukaryota"/>
</dbReference>
<dbReference type="HOGENOM" id="CLU_024648_3_1_1"/>
<dbReference type="InParanoid" id="Q6Z2T6"/>
<dbReference type="OMA" id="MVNPFNG"/>
<dbReference type="OrthoDB" id="655030at2759"/>
<dbReference type="BRENDA" id="1.3.1.83">
    <property type="organism ID" value="8948"/>
</dbReference>
<dbReference type="PlantReactome" id="R-OSA-1119602">
    <property type="pathway name" value="Phytyl-PP biosynthesis"/>
</dbReference>
<dbReference type="PlantReactome" id="R-OSA-1119605">
    <property type="pathway name" value="Chlorophyll a biosynthesis II"/>
</dbReference>
<dbReference type="UniPathway" id="UPA00160"/>
<dbReference type="UniPathway" id="UPA00668"/>
<dbReference type="Proteomes" id="UP000000763">
    <property type="component" value="Chromosome 2"/>
</dbReference>
<dbReference type="Proteomes" id="UP000007752">
    <property type="component" value="Chromosome 2"/>
</dbReference>
<dbReference type="Proteomes" id="UP000059680">
    <property type="component" value="Chromosome 2"/>
</dbReference>
<dbReference type="ExpressionAtlas" id="Q6Z2T6">
    <property type="expression patterns" value="baseline and differential"/>
</dbReference>
<dbReference type="GO" id="GO:0009507">
    <property type="term" value="C:chloroplast"/>
    <property type="evidence" value="ECO:0007669"/>
    <property type="project" value="UniProtKB-SubCell"/>
</dbReference>
<dbReference type="GO" id="GO:0071949">
    <property type="term" value="F:FAD binding"/>
    <property type="evidence" value="ECO:0007669"/>
    <property type="project" value="InterPro"/>
</dbReference>
<dbReference type="GO" id="GO:0102067">
    <property type="term" value="F:geranylgeranyl diphosphate reductase activity"/>
    <property type="evidence" value="ECO:0007669"/>
    <property type="project" value="UniProtKB-EC"/>
</dbReference>
<dbReference type="GO" id="GO:0045550">
    <property type="term" value="F:geranylgeranyl reductase activity"/>
    <property type="evidence" value="ECO:0000318"/>
    <property type="project" value="GO_Central"/>
</dbReference>
<dbReference type="GO" id="GO:0015995">
    <property type="term" value="P:chlorophyll biosynthetic process"/>
    <property type="evidence" value="ECO:0000318"/>
    <property type="project" value="GO_Central"/>
</dbReference>
<dbReference type="GO" id="GO:0015979">
    <property type="term" value="P:photosynthesis"/>
    <property type="evidence" value="ECO:0007669"/>
    <property type="project" value="UniProtKB-KW"/>
</dbReference>
<dbReference type="GO" id="GO:0010189">
    <property type="term" value="P:vitamin E biosynthetic process"/>
    <property type="evidence" value="ECO:0007669"/>
    <property type="project" value="UniProtKB-UniPathway"/>
</dbReference>
<dbReference type="FunFam" id="3.50.50.60:FF:000083">
    <property type="entry name" value="Geranylgeranyl diphosphate reductase"/>
    <property type="match status" value="1"/>
</dbReference>
<dbReference type="Gene3D" id="3.50.50.60">
    <property type="entry name" value="FAD/NAD(P)-binding domain"/>
    <property type="match status" value="1"/>
</dbReference>
<dbReference type="InterPro" id="IPR010253">
    <property type="entry name" value="BchP_ChlP_pln/prok"/>
</dbReference>
<dbReference type="InterPro" id="IPR002938">
    <property type="entry name" value="FAD-bd"/>
</dbReference>
<dbReference type="InterPro" id="IPR036188">
    <property type="entry name" value="FAD/NAD-bd_sf"/>
</dbReference>
<dbReference type="InterPro" id="IPR011777">
    <property type="entry name" value="Geranylgeranyl_Rdtase_fam"/>
</dbReference>
<dbReference type="InterPro" id="IPR011774">
    <property type="entry name" value="Geranylgeranyl_Rdtase_pln/cyn"/>
</dbReference>
<dbReference type="InterPro" id="IPR050407">
    <property type="entry name" value="Geranylgeranyl_reductase"/>
</dbReference>
<dbReference type="NCBIfam" id="TIGR02023">
    <property type="entry name" value="BchP-ChlP"/>
    <property type="match status" value="1"/>
</dbReference>
<dbReference type="NCBIfam" id="TIGR02028">
    <property type="entry name" value="ChlP"/>
    <property type="match status" value="1"/>
</dbReference>
<dbReference type="NCBIfam" id="TIGR02032">
    <property type="entry name" value="GG-red-SF"/>
    <property type="match status" value="1"/>
</dbReference>
<dbReference type="PANTHER" id="PTHR42685">
    <property type="entry name" value="GERANYLGERANYL DIPHOSPHATE REDUCTASE"/>
    <property type="match status" value="1"/>
</dbReference>
<dbReference type="PANTHER" id="PTHR42685:SF4">
    <property type="entry name" value="GERANYLGERANYL DIPHOSPHATE REDUCTASE, CHLOROPLASTIC"/>
    <property type="match status" value="1"/>
</dbReference>
<dbReference type="Pfam" id="PF01494">
    <property type="entry name" value="FAD_binding_3"/>
    <property type="match status" value="1"/>
</dbReference>
<dbReference type="PRINTS" id="PR00420">
    <property type="entry name" value="RNGMNOXGNASE"/>
</dbReference>
<dbReference type="SUPFAM" id="SSF51905">
    <property type="entry name" value="FAD/NAD(P)-binding domain"/>
    <property type="match status" value="1"/>
</dbReference>
<evidence type="ECO:0000250" key="1"/>
<evidence type="ECO:0000255" key="2"/>
<evidence type="ECO:0000305" key="3"/>
<organism>
    <name type="scientific">Oryza sativa subsp. japonica</name>
    <name type="common">Rice</name>
    <dbReference type="NCBI Taxonomy" id="39947"/>
    <lineage>
        <taxon>Eukaryota</taxon>
        <taxon>Viridiplantae</taxon>
        <taxon>Streptophyta</taxon>
        <taxon>Embryophyta</taxon>
        <taxon>Tracheophyta</taxon>
        <taxon>Spermatophyta</taxon>
        <taxon>Magnoliopsida</taxon>
        <taxon>Liliopsida</taxon>
        <taxon>Poales</taxon>
        <taxon>Poaceae</taxon>
        <taxon>BOP clade</taxon>
        <taxon>Oryzoideae</taxon>
        <taxon>Oryzeae</taxon>
        <taxon>Oryzinae</taxon>
        <taxon>Oryza</taxon>
        <taxon>Oryza sativa</taxon>
    </lineage>
</organism>
<gene>
    <name type="primary">CHLP</name>
    <name type="ordered locus">Os02g0744900</name>
    <name type="ordered locus">LOC_Os02g51080</name>
    <name type="ORF">OJ1118_G04.11</name>
    <name type="ORF">OJ1734_E02.38</name>
    <name type="ORF">OsJ_08361</name>
</gene>
<keyword id="KW-0149">Chlorophyll biosynthesis</keyword>
<keyword id="KW-0150">Chloroplast</keyword>
<keyword id="KW-0521">NADP</keyword>
<keyword id="KW-0560">Oxidoreductase</keyword>
<keyword id="KW-0602">Photosynthesis</keyword>
<keyword id="KW-0934">Plastid</keyword>
<keyword id="KW-1185">Reference proteome</keyword>
<keyword id="KW-0809">Transit peptide</keyword>
<accession>Q6Z2T6</accession>
<accession>Q0DXL8</accession>
<protein>
    <recommendedName>
        <fullName>Geranylgeranyl diphosphate reductase, chloroplastic</fullName>
        <ecNumber>1.3.1.83</ecNumber>
    </recommendedName>
    <alternativeName>
        <fullName>Geranylgeranyl reductase</fullName>
    </alternativeName>
</protein>
<feature type="transit peptide" description="Chloroplast" evidence="2">
    <location>
        <begin position="1"/>
        <end position="37"/>
    </location>
</feature>
<feature type="chain" id="PRO_0000386543" description="Geranylgeranyl diphosphate reductase, chloroplastic">
    <location>
        <begin position="38"/>
        <end position="463"/>
    </location>
</feature>
<proteinExistence type="evidence at transcript level"/>
<reference key="1">
    <citation type="journal article" date="2005" name="Nature">
        <title>The map-based sequence of the rice genome.</title>
        <authorList>
            <consortium name="International rice genome sequencing project (IRGSP)"/>
        </authorList>
    </citation>
    <scope>NUCLEOTIDE SEQUENCE [LARGE SCALE GENOMIC DNA]</scope>
    <source>
        <strain>cv. Nipponbare</strain>
    </source>
</reference>
<reference key="2">
    <citation type="journal article" date="2008" name="Nucleic Acids Res.">
        <title>The rice annotation project database (RAP-DB): 2008 update.</title>
        <authorList>
            <consortium name="The rice annotation project (RAP)"/>
        </authorList>
    </citation>
    <scope>GENOME REANNOTATION</scope>
    <source>
        <strain>cv. Nipponbare</strain>
    </source>
</reference>
<reference key="3">
    <citation type="journal article" date="2013" name="Rice">
        <title>Improvement of the Oryza sativa Nipponbare reference genome using next generation sequence and optical map data.</title>
        <authorList>
            <person name="Kawahara Y."/>
            <person name="de la Bastide M."/>
            <person name="Hamilton J.P."/>
            <person name="Kanamori H."/>
            <person name="McCombie W.R."/>
            <person name="Ouyang S."/>
            <person name="Schwartz D.C."/>
            <person name="Tanaka T."/>
            <person name="Wu J."/>
            <person name="Zhou S."/>
            <person name="Childs K.L."/>
            <person name="Davidson R.M."/>
            <person name="Lin H."/>
            <person name="Quesada-Ocampo L."/>
            <person name="Vaillancourt B."/>
            <person name="Sakai H."/>
            <person name="Lee S.S."/>
            <person name="Kim J."/>
            <person name="Numa H."/>
            <person name="Itoh T."/>
            <person name="Buell C.R."/>
            <person name="Matsumoto T."/>
        </authorList>
    </citation>
    <scope>GENOME REANNOTATION</scope>
    <source>
        <strain>cv. Nipponbare</strain>
    </source>
</reference>
<reference key="4">
    <citation type="journal article" date="2005" name="PLoS Biol.">
        <title>The genomes of Oryza sativa: a history of duplications.</title>
        <authorList>
            <person name="Yu J."/>
            <person name="Wang J."/>
            <person name="Lin W."/>
            <person name="Li S."/>
            <person name="Li H."/>
            <person name="Zhou J."/>
            <person name="Ni P."/>
            <person name="Dong W."/>
            <person name="Hu S."/>
            <person name="Zeng C."/>
            <person name="Zhang J."/>
            <person name="Zhang Y."/>
            <person name="Li R."/>
            <person name="Xu Z."/>
            <person name="Li S."/>
            <person name="Li X."/>
            <person name="Zheng H."/>
            <person name="Cong L."/>
            <person name="Lin L."/>
            <person name="Yin J."/>
            <person name="Geng J."/>
            <person name="Li G."/>
            <person name="Shi J."/>
            <person name="Liu J."/>
            <person name="Lv H."/>
            <person name="Li J."/>
            <person name="Wang J."/>
            <person name="Deng Y."/>
            <person name="Ran L."/>
            <person name="Shi X."/>
            <person name="Wang X."/>
            <person name="Wu Q."/>
            <person name="Li C."/>
            <person name="Ren X."/>
            <person name="Wang J."/>
            <person name="Wang X."/>
            <person name="Li D."/>
            <person name="Liu D."/>
            <person name="Zhang X."/>
            <person name="Ji Z."/>
            <person name="Zhao W."/>
            <person name="Sun Y."/>
            <person name="Zhang Z."/>
            <person name="Bao J."/>
            <person name="Han Y."/>
            <person name="Dong L."/>
            <person name="Ji J."/>
            <person name="Chen P."/>
            <person name="Wu S."/>
            <person name="Liu J."/>
            <person name="Xiao Y."/>
            <person name="Bu D."/>
            <person name="Tan J."/>
            <person name="Yang L."/>
            <person name="Ye C."/>
            <person name="Zhang J."/>
            <person name="Xu J."/>
            <person name="Zhou Y."/>
            <person name="Yu Y."/>
            <person name="Zhang B."/>
            <person name="Zhuang S."/>
            <person name="Wei H."/>
            <person name="Liu B."/>
            <person name="Lei M."/>
            <person name="Yu H."/>
            <person name="Li Y."/>
            <person name="Xu H."/>
            <person name="Wei S."/>
            <person name="He X."/>
            <person name="Fang L."/>
            <person name="Zhang Z."/>
            <person name="Zhang Y."/>
            <person name="Huang X."/>
            <person name="Su Z."/>
            <person name="Tong W."/>
            <person name="Li J."/>
            <person name="Tong Z."/>
            <person name="Li S."/>
            <person name="Ye J."/>
            <person name="Wang L."/>
            <person name="Fang L."/>
            <person name="Lei T."/>
            <person name="Chen C.-S."/>
            <person name="Chen H.-C."/>
            <person name="Xu Z."/>
            <person name="Li H."/>
            <person name="Huang H."/>
            <person name="Zhang F."/>
            <person name="Xu H."/>
            <person name="Li N."/>
            <person name="Zhao C."/>
            <person name="Li S."/>
            <person name="Dong L."/>
            <person name="Huang Y."/>
            <person name="Li L."/>
            <person name="Xi Y."/>
            <person name="Qi Q."/>
            <person name="Li W."/>
            <person name="Zhang B."/>
            <person name="Hu W."/>
            <person name="Zhang Y."/>
            <person name="Tian X."/>
            <person name="Jiao Y."/>
            <person name="Liang X."/>
            <person name="Jin J."/>
            <person name="Gao L."/>
            <person name="Zheng W."/>
            <person name="Hao B."/>
            <person name="Liu S.-M."/>
            <person name="Wang W."/>
            <person name="Yuan L."/>
            <person name="Cao M."/>
            <person name="McDermott J."/>
            <person name="Samudrala R."/>
            <person name="Wang J."/>
            <person name="Wong G.K.-S."/>
            <person name="Yang H."/>
        </authorList>
    </citation>
    <scope>NUCLEOTIDE SEQUENCE [LARGE SCALE GENOMIC DNA]</scope>
    <source>
        <strain>cv. Nipponbare</strain>
    </source>
</reference>
<reference key="5">
    <citation type="journal article" date="2003" name="Science">
        <title>Collection, mapping, and annotation of over 28,000 cDNA clones from japonica rice.</title>
        <authorList>
            <consortium name="The rice full-length cDNA consortium"/>
        </authorList>
    </citation>
    <scope>NUCLEOTIDE SEQUENCE [LARGE SCALE MRNA]</scope>
    <source>
        <strain>cv. Nipponbare</strain>
    </source>
</reference>
<name>CHLP_ORYSJ</name>